<comment type="subcellular location">
    <subcellularLocation>
        <location evidence="7">Membrane</location>
        <topology evidence="7">Multi-pass membrane protein</topology>
    </subcellularLocation>
</comment>
<comment type="alternative products">
    <event type="alternative splicing"/>
    <isoform>
        <id>Q7T3Q7-1</id>
        <name evidence="5">1</name>
        <sequence type="displayed"/>
    </isoform>
    <isoform>
        <id>Q7T3Q7-2</id>
        <name evidence="5">2</name>
        <sequence type="described" ref="VSP_052261 VSP_052262"/>
    </isoform>
</comment>
<comment type="tissue specificity">
    <text evidence="5">Expressed in a subset of retinal horizontal cells as well as in retinal ganglion cells.</text>
</comment>
<comment type="similarity">
    <text evidence="3">Belongs to the G-protein coupled receptor 1 family. Opsin subfamily.</text>
</comment>
<keyword id="KW-0025">Alternative splicing</keyword>
<keyword id="KW-0157">Chromophore</keyword>
<keyword id="KW-1015">Disulfide bond</keyword>
<keyword id="KW-0297">G-protein coupled receptor</keyword>
<keyword id="KW-0472">Membrane</keyword>
<keyword id="KW-0600">Photoreceptor protein</keyword>
<keyword id="KW-0675">Receptor</keyword>
<keyword id="KW-0681">Retinal protein</keyword>
<keyword id="KW-0716">Sensory transduction</keyword>
<keyword id="KW-0807">Transducer</keyword>
<keyword id="KW-0812">Transmembrane</keyword>
<keyword id="KW-1133">Transmembrane helix</keyword>
<organism>
    <name type="scientific">Rutilus rutilus</name>
    <name type="common">Roach</name>
    <dbReference type="NCBI Taxonomy" id="48668"/>
    <lineage>
        <taxon>Eukaryota</taxon>
        <taxon>Metazoa</taxon>
        <taxon>Chordata</taxon>
        <taxon>Craniata</taxon>
        <taxon>Vertebrata</taxon>
        <taxon>Euteleostomi</taxon>
        <taxon>Actinopterygii</taxon>
        <taxon>Neopterygii</taxon>
        <taxon>Teleostei</taxon>
        <taxon>Ostariophysi</taxon>
        <taxon>Cypriniformes</taxon>
        <taxon>Leuciscidae</taxon>
        <taxon>Leuciscinae</taxon>
        <taxon>Rutilus</taxon>
    </lineage>
</organism>
<proteinExistence type="evidence at transcript level"/>
<evidence type="ECO:0000250" key="1"/>
<evidence type="ECO:0000255" key="2"/>
<evidence type="ECO:0000255" key="3">
    <source>
        <dbReference type="PROSITE-ProRule" id="PRU00521"/>
    </source>
</evidence>
<evidence type="ECO:0000256" key="4">
    <source>
        <dbReference type="SAM" id="MobiDB-lite"/>
    </source>
</evidence>
<evidence type="ECO:0000269" key="5">
    <source>
    </source>
</evidence>
<evidence type="ECO:0000303" key="6">
    <source>
    </source>
</evidence>
<evidence type="ECO:0000305" key="7"/>
<evidence type="ECO:0000312" key="8">
    <source>
        <dbReference type="EMBL" id="AAM77793.1"/>
    </source>
</evidence>
<feature type="chain" id="PRO_0000271191" description="Opsin-VA">
    <location>
        <begin position="1"/>
        <end position="382"/>
    </location>
</feature>
<feature type="topological domain" description="Extracellular" evidence="2">
    <location>
        <begin position="1"/>
        <end position="35"/>
    </location>
</feature>
<feature type="transmembrane region" description="Helical; Name=1" evidence="2">
    <location>
        <begin position="36"/>
        <end position="56"/>
    </location>
</feature>
<feature type="topological domain" description="Cytoplasmic" evidence="2">
    <location>
        <begin position="57"/>
        <end position="67"/>
    </location>
</feature>
<feature type="transmembrane region" description="Helical; Name=2" evidence="2">
    <location>
        <begin position="68"/>
        <end position="88"/>
    </location>
</feature>
<feature type="topological domain" description="Extracellular" evidence="2">
    <location>
        <begin position="89"/>
        <end position="103"/>
    </location>
</feature>
<feature type="transmembrane region" description="Helical; Name=3" evidence="2">
    <location>
        <begin position="104"/>
        <end position="124"/>
    </location>
</feature>
<feature type="topological domain" description="Cytoplasmic" evidence="2">
    <location>
        <begin position="125"/>
        <end position="147"/>
    </location>
</feature>
<feature type="transmembrane region" description="Helical; Name=4" evidence="2">
    <location>
        <begin position="148"/>
        <end position="168"/>
    </location>
</feature>
<feature type="topological domain" description="Extracellular" evidence="2">
    <location>
        <begin position="169"/>
        <end position="193"/>
    </location>
</feature>
<feature type="transmembrane region" description="Helical; Name=5" evidence="2">
    <location>
        <begin position="194"/>
        <end position="214"/>
    </location>
</feature>
<feature type="topological domain" description="Cytoplasmic" evidence="2">
    <location>
        <begin position="215"/>
        <end position="244"/>
    </location>
</feature>
<feature type="transmembrane region" description="Helical; Name=6" evidence="2">
    <location>
        <begin position="245"/>
        <end position="265"/>
    </location>
</feature>
<feature type="topological domain" description="Extracellular" evidence="2">
    <location>
        <begin position="266"/>
        <end position="279"/>
    </location>
</feature>
<feature type="transmembrane region" description="Helical; Name=7" evidence="2">
    <location>
        <begin position="280"/>
        <end position="300"/>
    </location>
</feature>
<feature type="topological domain" description="Cytoplasmic" evidence="2">
    <location>
        <begin position="301"/>
        <end position="382"/>
    </location>
</feature>
<feature type="region of interest" description="Disordered" evidence="4">
    <location>
        <begin position="330"/>
        <end position="371"/>
    </location>
</feature>
<feature type="compositionally biased region" description="Polar residues" evidence="4">
    <location>
        <begin position="330"/>
        <end position="346"/>
    </location>
</feature>
<feature type="compositionally biased region" description="Basic and acidic residues" evidence="4">
    <location>
        <begin position="349"/>
        <end position="368"/>
    </location>
</feature>
<feature type="modified residue" description="N6-(retinylidene)lysine" evidence="1">
    <location>
        <position position="287"/>
    </location>
</feature>
<feature type="disulfide bond" evidence="3">
    <location>
        <begin position="103"/>
        <end position="180"/>
    </location>
</feature>
<feature type="splice variant" id="VSP_052261" description="In isoform 2." evidence="6">
    <original>FRKCLVQ</original>
    <variation>VTLHSCT</variation>
    <location>
        <begin position="304"/>
        <end position="310"/>
    </location>
</feature>
<feature type="splice variant" id="VSP_052262" description="In isoform 2." evidence="6">
    <location>
        <begin position="311"/>
        <end position="382"/>
    </location>
</feature>
<accession>Q7T3Q7</accession>
<accession>Q7T3Q6</accession>
<protein>
    <recommendedName>
        <fullName>Opsin-VA</fullName>
    </recommendedName>
    <alternativeName>
        <fullName>Vertebrate ancient opsin</fullName>
    </alternativeName>
</protein>
<sequence>MELFPVAVNGVSHAEDPFSGPLTFIAPWNYKVLATLMFVVTAASLSENFAVMLVTFRFTQLRKPLNYIIVNLSLADFLVSLTGGTISFLTNYHGYFFLGKWACVLEGFAVTYFGIVALWSLAVLAFERFFVICRPLGNIRLRGKHAALGLLFVWTFSFIWTIPPVLGWSSYTVSKIGTTCEPNWYSGNFHDHTFIIAFFITCFILPLGVIVVCYCKLIKKLRKVSNTHGRLGNARKPERQVTRMVVVMIVAFMVAWTPYAAFSIVVTAHPSIHLDPRLAAAPAFFSKTAAVYNPVIYVFMNKQFRKCLVQLLRCRDVTIIEGNINQTSERQGMTNESHTGEMSTIASRIPKDGSIPEKTQEHPGERRSLAHIPIPENKVCPM</sequence>
<reference evidence="7 8" key="1">
    <citation type="journal article" date="2003" name="Curr. Biol.">
        <title>VA opsin, melanopsin, and an inherent light response within retinal interneurons.</title>
        <authorList>
            <person name="Jenkins A."/>
            <person name="Munoz M."/>
            <person name="Tarttelin E.E."/>
            <person name="Bellingham J."/>
            <person name="Foster R.G."/>
            <person name="Hankins M.W."/>
        </authorList>
    </citation>
    <scope>NUCLEOTIDE SEQUENCE [MRNA] (ISOFORMS 1 AND 2)</scope>
    <scope>TISSUE SPECIFICITY</scope>
    <source>
        <tissue evidence="8">Retina</tissue>
    </source>
</reference>
<dbReference type="EMBL" id="AY116411">
    <property type="protein sequence ID" value="AAM77793.1"/>
    <property type="molecule type" value="mRNA"/>
</dbReference>
<dbReference type="EMBL" id="AY116412">
    <property type="protein sequence ID" value="AAM77794.1"/>
    <property type="molecule type" value="mRNA"/>
</dbReference>
<dbReference type="SMR" id="Q7T3Q7"/>
<dbReference type="GO" id="GO:0016020">
    <property type="term" value="C:membrane"/>
    <property type="evidence" value="ECO:0007669"/>
    <property type="project" value="UniProtKB-SubCell"/>
</dbReference>
<dbReference type="GO" id="GO:0004930">
    <property type="term" value="F:G protein-coupled receptor activity"/>
    <property type="evidence" value="ECO:0007669"/>
    <property type="project" value="UniProtKB-KW"/>
</dbReference>
<dbReference type="GO" id="GO:0009881">
    <property type="term" value="F:photoreceptor activity"/>
    <property type="evidence" value="ECO:0007669"/>
    <property type="project" value="UniProtKB-KW"/>
</dbReference>
<dbReference type="GO" id="GO:0007602">
    <property type="term" value="P:phototransduction"/>
    <property type="evidence" value="ECO:0007669"/>
    <property type="project" value="UniProtKB-KW"/>
</dbReference>
<dbReference type="CDD" id="cd15082">
    <property type="entry name" value="7tmA_VA_opsin"/>
    <property type="match status" value="1"/>
</dbReference>
<dbReference type="FunFam" id="1.20.1070.10:FF:000238">
    <property type="entry name" value="Opsin-VA"/>
    <property type="match status" value="1"/>
</dbReference>
<dbReference type="Gene3D" id="1.20.1070.10">
    <property type="entry name" value="Rhodopsin 7-helix transmembrane proteins"/>
    <property type="match status" value="1"/>
</dbReference>
<dbReference type="InterPro" id="IPR050125">
    <property type="entry name" value="GPCR_opsins"/>
</dbReference>
<dbReference type="InterPro" id="IPR000276">
    <property type="entry name" value="GPCR_Rhodpsn"/>
</dbReference>
<dbReference type="InterPro" id="IPR017452">
    <property type="entry name" value="GPCR_Rhodpsn_7TM"/>
</dbReference>
<dbReference type="InterPro" id="IPR002206">
    <property type="entry name" value="Opsin_pineal"/>
</dbReference>
<dbReference type="InterPro" id="IPR027430">
    <property type="entry name" value="Retinal_BS"/>
</dbReference>
<dbReference type="PANTHER" id="PTHR24240">
    <property type="entry name" value="OPSIN"/>
    <property type="match status" value="1"/>
</dbReference>
<dbReference type="Pfam" id="PF00001">
    <property type="entry name" value="7tm_1"/>
    <property type="match status" value="1"/>
</dbReference>
<dbReference type="PRINTS" id="PR00237">
    <property type="entry name" value="GPCRRHODOPSN"/>
</dbReference>
<dbReference type="PRINTS" id="PR00666">
    <property type="entry name" value="PINOPSIN"/>
</dbReference>
<dbReference type="SUPFAM" id="SSF81321">
    <property type="entry name" value="Family A G protein-coupled receptor-like"/>
    <property type="match status" value="1"/>
</dbReference>
<dbReference type="PROSITE" id="PS00237">
    <property type="entry name" value="G_PROTEIN_RECEP_F1_1"/>
    <property type="match status" value="1"/>
</dbReference>
<dbReference type="PROSITE" id="PS50262">
    <property type="entry name" value="G_PROTEIN_RECEP_F1_2"/>
    <property type="match status" value="1"/>
</dbReference>
<dbReference type="PROSITE" id="PS00238">
    <property type="entry name" value="OPSIN"/>
    <property type="match status" value="1"/>
</dbReference>
<name>OPSO_RUTRU</name>